<comment type="function">
    <text evidence="1">This enzyme is involved in nucleotide metabolism: it produces dUMP, the immediate precursor of thymidine nucleotides and it decreases the intracellular concentration of dUTP so that uracil cannot be incorporated into DNA.</text>
</comment>
<comment type="catalytic activity">
    <reaction evidence="1">
        <text>dUTP + H2O = dUMP + diphosphate + H(+)</text>
        <dbReference type="Rhea" id="RHEA:10248"/>
        <dbReference type="ChEBI" id="CHEBI:15377"/>
        <dbReference type="ChEBI" id="CHEBI:15378"/>
        <dbReference type="ChEBI" id="CHEBI:33019"/>
        <dbReference type="ChEBI" id="CHEBI:61555"/>
        <dbReference type="ChEBI" id="CHEBI:246422"/>
        <dbReference type="EC" id="3.6.1.23"/>
    </reaction>
</comment>
<comment type="cofactor">
    <cofactor evidence="1">
        <name>Mg(2+)</name>
        <dbReference type="ChEBI" id="CHEBI:18420"/>
    </cofactor>
</comment>
<comment type="pathway">
    <text evidence="1">Pyrimidine metabolism; dUMP biosynthesis; dUMP from dCTP (dUTP route): step 2/2.</text>
</comment>
<comment type="similarity">
    <text evidence="1">Belongs to the dUTPase family.</text>
</comment>
<feature type="chain" id="PRO_1000094983" description="Deoxyuridine 5'-triphosphate nucleotidohydrolase">
    <location>
        <begin position="1"/>
        <end position="156"/>
    </location>
</feature>
<feature type="binding site" evidence="1">
    <location>
        <begin position="76"/>
        <end position="78"/>
    </location>
    <ligand>
        <name>substrate</name>
    </ligand>
</feature>
<feature type="binding site" evidence="1">
    <location>
        <position position="89"/>
    </location>
    <ligand>
        <name>substrate</name>
    </ligand>
</feature>
<feature type="binding site" evidence="1">
    <location>
        <begin position="93"/>
        <end position="95"/>
    </location>
    <ligand>
        <name>substrate</name>
    </ligand>
</feature>
<feature type="binding site" evidence="1">
    <location>
        <position position="103"/>
    </location>
    <ligand>
        <name>substrate</name>
    </ligand>
</feature>
<reference key="1">
    <citation type="journal article" date="2010" name="Stand. Genomic Sci.">
        <title>Complete genome sequence of Rhizobium leguminosarum bv trifolii strain WSM2304, an effective microsymbiont of the South American clover Trifolium polymorphum.</title>
        <authorList>
            <person name="Reeve W."/>
            <person name="O'Hara G."/>
            <person name="Chain P."/>
            <person name="Ardley J."/>
            <person name="Brau L."/>
            <person name="Nandesena K."/>
            <person name="Tiwari R."/>
            <person name="Malfatti S."/>
            <person name="Kiss H."/>
            <person name="Lapidus A."/>
            <person name="Copeland A."/>
            <person name="Nolan M."/>
            <person name="Land M."/>
            <person name="Ivanova N."/>
            <person name="Mavromatis K."/>
            <person name="Markowitz V."/>
            <person name="Kyrpides N."/>
            <person name="Melino V."/>
            <person name="Denton M."/>
            <person name="Yates R."/>
            <person name="Howieson J."/>
        </authorList>
    </citation>
    <scope>NUCLEOTIDE SEQUENCE [LARGE SCALE GENOMIC DNA]</scope>
    <source>
        <strain>WSM2304</strain>
    </source>
</reference>
<gene>
    <name evidence="1" type="primary">dut</name>
    <name type="ordered locus">Rleg2_4346</name>
</gene>
<dbReference type="EC" id="3.6.1.23" evidence="1"/>
<dbReference type="EMBL" id="CP001191">
    <property type="protein sequence ID" value="ACI57604.1"/>
    <property type="molecule type" value="Genomic_DNA"/>
</dbReference>
<dbReference type="RefSeq" id="WP_012559707.1">
    <property type="nucleotide sequence ID" value="NC_011369.1"/>
</dbReference>
<dbReference type="SMR" id="B5ZYI7"/>
<dbReference type="STRING" id="395492.Rleg2_4346"/>
<dbReference type="KEGG" id="rlt:Rleg2_4346"/>
<dbReference type="eggNOG" id="COG0756">
    <property type="taxonomic scope" value="Bacteria"/>
</dbReference>
<dbReference type="HOGENOM" id="CLU_068508_1_0_5"/>
<dbReference type="UniPathway" id="UPA00610">
    <property type="reaction ID" value="UER00666"/>
</dbReference>
<dbReference type="Proteomes" id="UP000008330">
    <property type="component" value="Chromosome"/>
</dbReference>
<dbReference type="GO" id="GO:0004170">
    <property type="term" value="F:dUTP diphosphatase activity"/>
    <property type="evidence" value="ECO:0007669"/>
    <property type="project" value="UniProtKB-UniRule"/>
</dbReference>
<dbReference type="GO" id="GO:0000287">
    <property type="term" value="F:magnesium ion binding"/>
    <property type="evidence" value="ECO:0007669"/>
    <property type="project" value="UniProtKB-UniRule"/>
</dbReference>
<dbReference type="GO" id="GO:0006226">
    <property type="term" value="P:dUMP biosynthetic process"/>
    <property type="evidence" value="ECO:0007669"/>
    <property type="project" value="UniProtKB-UniRule"/>
</dbReference>
<dbReference type="GO" id="GO:0046081">
    <property type="term" value="P:dUTP catabolic process"/>
    <property type="evidence" value="ECO:0007669"/>
    <property type="project" value="InterPro"/>
</dbReference>
<dbReference type="CDD" id="cd07557">
    <property type="entry name" value="trimeric_dUTPase"/>
    <property type="match status" value="1"/>
</dbReference>
<dbReference type="Gene3D" id="2.70.40.10">
    <property type="match status" value="1"/>
</dbReference>
<dbReference type="HAMAP" id="MF_00116">
    <property type="entry name" value="dUTPase_bact"/>
    <property type="match status" value="1"/>
</dbReference>
<dbReference type="InterPro" id="IPR008181">
    <property type="entry name" value="dUTPase"/>
</dbReference>
<dbReference type="InterPro" id="IPR029054">
    <property type="entry name" value="dUTPase-like"/>
</dbReference>
<dbReference type="InterPro" id="IPR036157">
    <property type="entry name" value="dUTPase-like_sf"/>
</dbReference>
<dbReference type="InterPro" id="IPR033704">
    <property type="entry name" value="dUTPase_trimeric"/>
</dbReference>
<dbReference type="NCBIfam" id="TIGR00576">
    <property type="entry name" value="dut"/>
    <property type="match status" value="1"/>
</dbReference>
<dbReference type="NCBIfam" id="NF001862">
    <property type="entry name" value="PRK00601.1"/>
    <property type="match status" value="1"/>
</dbReference>
<dbReference type="PANTHER" id="PTHR11241">
    <property type="entry name" value="DEOXYURIDINE 5'-TRIPHOSPHATE NUCLEOTIDOHYDROLASE"/>
    <property type="match status" value="1"/>
</dbReference>
<dbReference type="PANTHER" id="PTHR11241:SF0">
    <property type="entry name" value="DEOXYURIDINE 5'-TRIPHOSPHATE NUCLEOTIDOHYDROLASE"/>
    <property type="match status" value="1"/>
</dbReference>
<dbReference type="Pfam" id="PF00692">
    <property type="entry name" value="dUTPase"/>
    <property type="match status" value="1"/>
</dbReference>
<dbReference type="SUPFAM" id="SSF51283">
    <property type="entry name" value="dUTPase-like"/>
    <property type="match status" value="1"/>
</dbReference>
<name>DUT_RHILW</name>
<proteinExistence type="inferred from homology"/>
<evidence type="ECO:0000255" key="1">
    <source>
        <dbReference type="HAMAP-Rule" id="MF_00116"/>
    </source>
</evidence>
<organism>
    <name type="scientific">Rhizobium leguminosarum bv. trifolii (strain WSM2304)</name>
    <dbReference type="NCBI Taxonomy" id="395492"/>
    <lineage>
        <taxon>Bacteria</taxon>
        <taxon>Pseudomonadati</taxon>
        <taxon>Pseudomonadota</taxon>
        <taxon>Alphaproteobacteria</taxon>
        <taxon>Hyphomicrobiales</taxon>
        <taxon>Rhizobiaceae</taxon>
        <taxon>Rhizobium/Agrobacterium group</taxon>
        <taxon>Rhizobium</taxon>
    </lineage>
</organism>
<accession>B5ZYI7</accession>
<protein>
    <recommendedName>
        <fullName evidence="1">Deoxyuridine 5'-triphosphate nucleotidohydrolase</fullName>
        <shortName evidence="1">dUTPase</shortName>
        <ecNumber evidence="1">3.6.1.23</ecNumber>
    </recommendedName>
    <alternativeName>
        <fullName evidence="1">dUTP pyrophosphatase</fullName>
    </alternativeName>
</protein>
<keyword id="KW-0378">Hydrolase</keyword>
<keyword id="KW-0460">Magnesium</keyword>
<keyword id="KW-0479">Metal-binding</keyword>
<keyword id="KW-0546">Nucleotide metabolism</keyword>
<keyword id="KW-1185">Reference proteome</keyword>
<sequence length="156" mass="16434">MTIHHDLRPTLNLIRLANGEGLDLPAYESKGAAGMDLRAAVDEAAPLTLQPGKRALVPTGFIFEIPEGFEGQVRPRSGLAFKHGITCLNSPGTVDSDYRGEVKVLLANLGDEAFTVERGMRIAQMVIAPVTQMRVAESAAASETTRGAGGFGSTGV</sequence>